<comment type="function">
    <text evidence="1">One of the primary rRNA binding proteins, it binds specifically to the 5'-end of 16S ribosomal RNA.</text>
</comment>
<comment type="subunit">
    <text evidence="1">Part of the 30S ribosomal subunit.</text>
</comment>
<comment type="similarity">
    <text evidence="1">Belongs to the universal ribosomal protein uS17 family.</text>
</comment>
<accession>A7MPH2</accession>
<organism>
    <name type="scientific">Cronobacter sakazakii (strain ATCC BAA-894)</name>
    <name type="common">Enterobacter sakazakii</name>
    <dbReference type="NCBI Taxonomy" id="290339"/>
    <lineage>
        <taxon>Bacteria</taxon>
        <taxon>Pseudomonadati</taxon>
        <taxon>Pseudomonadota</taxon>
        <taxon>Gammaproteobacteria</taxon>
        <taxon>Enterobacterales</taxon>
        <taxon>Enterobacteriaceae</taxon>
        <taxon>Cronobacter</taxon>
    </lineage>
</organism>
<name>RS17_CROS8</name>
<keyword id="KW-1185">Reference proteome</keyword>
<keyword id="KW-0687">Ribonucleoprotein</keyword>
<keyword id="KW-0689">Ribosomal protein</keyword>
<keyword id="KW-0694">RNA-binding</keyword>
<keyword id="KW-0699">rRNA-binding</keyword>
<sequence length="84" mass="9704">MTDKIRTLQGRVVSDKMEKSIVVAIERFVKHPIYGKFIKRTTKLHVHDENNECGIGDVVEIRECRPLSKTKSWTLVRVVEKAVL</sequence>
<feature type="chain" id="PRO_1000054950" description="Small ribosomal subunit protein uS17">
    <location>
        <begin position="1"/>
        <end position="84"/>
    </location>
</feature>
<gene>
    <name evidence="1" type="primary">rpsQ</name>
    <name type="ordered locus">ESA_00014</name>
</gene>
<proteinExistence type="inferred from homology"/>
<reference key="1">
    <citation type="journal article" date="2010" name="PLoS ONE">
        <title>Genome sequence of Cronobacter sakazakii BAA-894 and comparative genomic hybridization analysis with other Cronobacter species.</title>
        <authorList>
            <person name="Kucerova E."/>
            <person name="Clifton S.W."/>
            <person name="Xia X.Q."/>
            <person name="Long F."/>
            <person name="Porwollik S."/>
            <person name="Fulton L."/>
            <person name="Fronick C."/>
            <person name="Minx P."/>
            <person name="Kyung K."/>
            <person name="Warren W."/>
            <person name="Fulton R."/>
            <person name="Feng D."/>
            <person name="Wollam A."/>
            <person name="Shah N."/>
            <person name="Bhonagiri V."/>
            <person name="Nash W.E."/>
            <person name="Hallsworth-Pepin K."/>
            <person name="Wilson R.K."/>
            <person name="McClelland M."/>
            <person name="Forsythe S.J."/>
        </authorList>
    </citation>
    <scope>NUCLEOTIDE SEQUENCE [LARGE SCALE GENOMIC DNA]</scope>
    <source>
        <strain>ATCC BAA-894</strain>
    </source>
</reference>
<evidence type="ECO:0000255" key="1">
    <source>
        <dbReference type="HAMAP-Rule" id="MF_01345"/>
    </source>
</evidence>
<evidence type="ECO:0000305" key="2"/>
<dbReference type="EMBL" id="CP000783">
    <property type="protein sequence ID" value="ABU75323.1"/>
    <property type="molecule type" value="Genomic_DNA"/>
</dbReference>
<dbReference type="RefSeq" id="WP_000130100.1">
    <property type="nucleotide sequence ID" value="NC_009778.1"/>
</dbReference>
<dbReference type="SMR" id="A7MPH2"/>
<dbReference type="GeneID" id="93778676"/>
<dbReference type="KEGG" id="esa:ESA_00014"/>
<dbReference type="HOGENOM" id="CLU_073626_1_1_6"/>
<dbReference type="Proteomes" id="UP000000260">
    <property type="component" value="Chromosome"/>
</dbReference>
<dbReference type="GO" id="GO:0022627">
    <property type="term" value="C:cytosolic small ribosomal subunit"/>
    <property type="evidence" value="ECO:0007669"/>
    <property type="project" value="TreeGrafter"/>
</dbReference>
<dbReference type="GO" id="GO:0019843">
    <property type="term" value="F:rRNA binding"/>
    <property type="evidence" value="ECO:0007669"/>
    <property type="project" value="UniProtKB-UniRule"/>
</dbReference>
<dbReference type="GO" id="GO:0003735">
    <property type="term" value="F:structural constituent of ribosome"/>
    <property type="evidence" value="ECO:0007669"/>
    <property type="project" value="InterPro"/>
</dbReference>
<dbReference type="GO" id="GO:0006412">
    <property type="term" value="P:translation"/>
    <property type="evidence" value="ECO:0007669"/>
    <property type="project" value="UniProtKB-UniRule"/>
</dbReference>
<dbReference type="CDD" id="cd00364">
    <property type="entry name" value="Ribosomal_uS17"/>
    <property type="match status" value="1"/>
</dbReference>
<dbReference type="FunFam" id="2.40.50.140:FF:000014">
    <property type="entry name" value="30S ribosomal protein S17"/>
    <property type="match status" value="1"/>
</dbReference>
<dbReference type="Gene3D" id="2.40.50.140">
    <property type="entry name" value="Nucleic acid-binding proteins"/>
    <property type="match status" value="1"/>
</dbReference>
<dbReference type="HAMAP" id="MF_01345_B">
    <property type="entry name" value="Ribosomal_uS17_B"/>
    <property type="match status" value="1"/>
</dbReference>
<dbReference type="InterPro" id="IPR012340">
    <property type="entry name" value="NA-bd_OB-fold"/>
</dbReference>
<dbReference type="InterPro" id="IPR000266">
    <property type="entry name" value="Ribosomal_uS17"/>
</dbReference>
<dbReference type="InterPro" id="IPR019984">
    <property type="entry name" value="Ribosomal_uS17_bact/chlr"/>
</dbReference>
<dbReference type="InterPro" id="IPR019979">
    <property type="entry name" value="Ribosomal_uS17_CS"/>
</dbReference>
<dbReference type="NCBIfam" id="NF004123">
    <property type="entry name" value="PRK05610.1"/>
    <property type="match status" value="1"/>
</dbReference>
<dbReference type="NCBIfam" id="TIGR03635">
    <property type="entry name" value="uS17_bact"/>
    <property type="match status" value="1"/>
</dbReference>
<dbReference type="PANTHER" id="PTHR10744">
    <property type="entry name" value="40S RIBOSOMAL PROTEIN S11 FAMILY MEMBER"/>
    <property type="match status" value="1"/>
</dbReference>
<dbReference type="PANTHER" id="PTHR10744:SF1">
    <property type="entry name" value="SMALL RIBOSOMAL SUBUNIT PROTEIN US17M"/>
    <property type="match status" value="1"/>
</dbReference>
<dbReference type="Pfam" id="PF00366">
    <property type="entry name" value="Ribosomal_S17"/>
    <property type="match status" value="1"/>
</dbReference>
<dbReference type="PRINTS" id="PR00973">
    <property type="entry name" value="RIBOSOMALS17"/>
</dbReference>
<dbReference type="SUPFAM" id="SSF50249">
    <property type="entry name" value="Nucleic acid-binding proteins"/>
    <property type="match status" value="1"/>
</dbReference>
<dbReference type="PROSITE" id="PS00056">
    <property type="entry name" value="RIBOSOMAL_S17"/>
    <property type="match status" value="1"/>
</dbReference>
<protein>
    <recommendedName>
        <fullName evidence="1">Small ribosomal subunit protein uS17</fullName>
    </recommendedName>
    <alternativeName>
        <fullName evidence="2">30S ribosomal protein S17</fullName>
    </alternativeName>
</protein>